<evidence type="ECO:0000255" key="1">
    <source>
        <dbReference type="HAMAP-Rule" id="MF_01006"/>
    </source>
</evidence>
<sequence>MTNGQEPIAMLIAVSSADRLDLWQAIVLGFVQGATEFLPISSTAHLKVVPVVLGWGDPGVAFTAVIQLGSIVAVLSYFRQDLTYVLRGLVSAVRRQDFRSEPAQMGLGILFGTIPILIGGLLIKRFIPDYDNSPLRSLAAIAIVSIVMGLLLGIAEQLSKHQRDLSQLRLADGLWMGFAQALALIPGVSRSGSTLTAGLFQGLKRDTAARFSFLLGIPAITIAGLVELKDLLEAGIDGSSLGVLAIGTLSSLIFSWLAIAWLLRFLRTHNTWSFVVYRIIFGGVILTAIATGTLQNI</sequence>
<reference key="1">
    <citation type="journal article" date="2007" name="Photosyn. Res.">
        <title>Complete nucleotide sequence of the freshwater unicellular cyanobacterium Synechococcus elongatus PCC 6301 chromosome: gene content and organization.</title>
        <authorList>
            <person name="Sugita C."/>
            <person name="Ogata K."/>
            <person name="Shikata M."/>
            <person name="Jikuya H."/>
            <person name="Takano J."/>
            <person name="Furumichi M."/>
            <person name="Kanehisa M."/>
            <person name="Omata T."/>
            <person name="Sugiura M."/>
            <person name="Sugita M."/>
        </authorList>
    </citation>
    <scope>NUCLEOTIDE SEQUENCE [LARGE SCALE GENOMIC DNA]</scope>
    <source>
        <strain>ATCC 27144 / PCC 6301 / SAUG 1402/1</strain>
    </source>
</reference>
<accession>Q5N052</accession>
<gene>
    <name evidence="1" type="primary">uppP</name>
    <name type="synonym">cacA</name>
    <name type="ordered locus">syc2128_c</name>
</gene>
<name>UPPP_SYNP6</name>
<comment type="function">
    <text evidence="1">Catalyzes the dephosphorylation of undecaprenyl diphosphate (UPP). Confers resistance to bacitracin.</text>
</comment>
<comment type="catalytic activity">
    <reaction evidence="1">
        <text>di-trans,octa-cis-undecaprenyl diphosphate + H2O = di-trans,octa-cis-undecaprenyl phosphate + phosphate + H(+)</text>
        <dbReference type="Rhea" id="RHEA:28094"/>
        <dbReference type="ChEBI" id="CHEBI:15377"/>
        <dbReference type="ChEBI" id="CHEBI:15378"/>
        <dbReference type="ChEBI" id="CHEBI:43474"/>
        <dbReference type="ChEBI" id="CHEBI:58405"/>
        <dbReference type="ChEBI" id="CHEBI:60392"/>
        <dbReference type="EC" id="3.6.1.27"/>
    </reaction>
</comment>
<comment type="subcellular location">
    <subcellularLocation>
        <location evidence="1">Cell inner membrane</location>
        <topology evidence="1">Multi-pass membrane protein</topology>
    </subcellularLocation>
</comment>
<comment type="miscellaneous">
    <text>Bacitracin is thought to be involved in the inhibition of peptidoglycan synthesis by sequestering undecaprenyl diphosphate, thereby reducing the pool of lipid carrier available.</text>
</comment>
<comment type="similarity">
    <text evidence="1">Belongs to the UppP family.</text>
</comment>
<dbReference type="EC" id="3.6.1.27" evidence="1"/>
<dbReference type="EMBL" id="AP008231">
    <property type="protein sequence ID" value="BAD80318.1"/>
    <property type="molecule type" value="Genomic_DNA"/>
</dbReference>
<dbReference type="SMR" id="Q5N052"/>
<dbReference type="KEGG" id="syc:syc2128_c"/>
<dbReference type="eggNOG" id="COG1968">
    <property type="taxonomic scope" value="Bacteria"/>
</dbReference>
<dbReference type="Proteomes" id="UP000001175">
    <property type="component" value="Chromosome"/>
</dbReference>
<dbReference type="GO" id="GO:0005886">
    <property type="term" value="C:plasma membrane"/>
    <property type="evidence" value="ECO:0007669"/>
    <property type="project" value="UniProtKB-SubCell"/>
</dbReference>
<dbReference type="GO" id="GO:0050380">
    <property type="term" value="F:undecaprenyl-diphosphatase activity"/>
    <property type="evidence" value="ECO:0007669"/>
    <property type="project" value="UniProtKB-UniRule"/>
</dbReference>
<dbReference type="GO" id="GO:0071555">
    <property type="term" value="P:cell wall organization"/>
    <property type="evidence" value="ECO:0007669"/>
    <property type="project" value="UniProtKB-KW"/>
</dbReference>
<dbReference type="GO" id="GO:0009252">
    <property type="term" value="P:peptidoglycan biosynthetic process"/>
    <property type="evidence" value="ECO:0007669"/>
    <property type="project" value="UniProtKB-KW"/>
</dbReference>
<dbReference type="GO" id="GO:0008360">
    <property type="term" value="P:regulation of cell shape"/>
    <property type="evidence" value="ECO:0007669"/>
    <property type="project" value="UniProtKB-KW"/>
</dbReference>
<dbReference type="GO" id="GO:0046677">
    <property type="term" value="P:response to antibiotic"/>
    <property type="evidence" value="ECO:0007669"/>
    <property type="project" value="UniProtKB-UniRule"/>
</dbReference>
<dbReference type="HAMAP" id="MF_01006">
    <property type="entry name" value="Undec_diphosphatase"/>
    <property type="match status" value="1"/>
</dbReference>
<dbReference type="InterPro" id="IPR003824">
    <property type="entry name" value="UppP"/>
</dbReference>
<dbReference type="NCBIfam" id="NF001394">
    <property type="entry name" value="PRK00281.2-5"/>
    <property type="match status" value="1"/>
</dbReference>
<dbReference type="NCBIfam" id="TIGR00753">
    <property type="entry name" value="undec_PP_bacA"/>
    <property type="match status" value="1"/>
</dbReference>
<dbReference type="PANTHER" id="PTHR30622">
    <property type="entry name" value="UNDECAPRENYL-DIPHOSPHATASE"/>
    <property type="match status" value="1"/>
</dbReference>
<dbReference type="PANTHER" id="PTHR30622:SF4">
    <property type="entry name" value="UNDECAPRENYL-DIPHOSPHATASE"/>
    <property type="match status" value="1"/>
</dbReference>
<dbReference type="Pfam" id="PF02673">
    <property type="entry name" value="BacA"/>
    <property type="match status" value="1"/>
</dbReference>
<proteinExistence type="inferred from homology"/>
<protein>
    <recommendedName>
        <fullName evidence="1">Undecaprenyl-diphosphatase</fullName>
        <ecNumber evidence="1">3.6.1.27</ecNumber>
    </recommendedName>
    <alternativeName>
        <fullName evidence="1">Bacitracin resistance protein</fullName>
    </alternativeName>
    <alternativeName>
        <fullName evidence="1">Undecaprenyl pyrophosphate phosphatase</fullName>
    </alternativeName>
</protein>
<keyword id="KW-0046">Antibiotic resistance</keyword>
<keyword id="KW-0997">Cell inner membrane</keyword>
<keyword id="KW-1003">Cell membrane</keyword>
<keyword id="KW-0133">Cell shape</keyword>
<keyword id="KW-0961">Cell wall biogenesis/degradation</keyword>
<keyword id="KW-0378">Hydrolase</keyword>
<keyword id="KW-0472">Membrane</keyword>
<keyword id="KW-0573">Peptidoglycan synthesis</keyword>
<keyword id="KW-0812">Transmembrane</keyword>
<keyword id="KW-1133">Transmembrane helix</keyword>
<organism>
    <name type="scientific">Synechococcus sp. (strain ATCC 27144 / PCC 6301 / SAUG 1402/1)</name>
    <name type="common">Anacystis nidulans</name>
    <dbReference type="NCBI Taxonomy" id="269084"/>
    <lineage>
        <taxon>Bacteria</taxon>
        <taxon>Bacillati</taxon>
        <taxon>Cyanobacteriota</taxon>
        <taxon>Cyanophyceae</taxon>
        <taxon>Synechococcales</taxon>
        <taxon>Synechococcaceae</taxon>
        <taxon>Synechococcus</taxon>
    </lineage>
</organism>
<feature type="chain" id="PRO_0000151224" description="Undecaprenyl-diphosphatase">
    <location>
        <begin position="1"/>
        <end position="297"/>
    </location>
</feature>
<feature type="transmembrane region" description="Helical" evidence="1">
    <location>
        <begin position="58"/>
        <end position="78"/>
    </location>
</feature>
<feature type="transmembrane region" description="Helical" evidence="1">
    <location>
        <begin position="103"/>
        <end position="123"/>
    </location>
</feature>
<feature type="transmembrane region" description="Helical" evidence="1">
    <location>
        <begin position="138"/>
        <end position="158"/>
    </location>
</feature>
<feature type="transmembrane region" description="Helical" evidence="1">
    <location>
        <begin position="168"/>
        <end position="188"/>
    </location>
</feature>
<feature type="transmembrane region" description="Helical" evidence="1">
    <location>
        <begin position="208"/>
        <end position="228"/>
    </location>
</feature>
<feature type="transmembrane region" description="Helical" evidence="1">
    <location>
        <begin position="243"/>
        <end position="263"/>
    </location>
</feature>
<feature type="transmembrane region" description="Helical" evidence="1">
    <location>
        <begin position="274"/>
        <end position="294"/>
    </location>
</feature>